<accession>B0TP00</accession>
<keyword id="KW-0963">Cytoplasm</keyword>
<keyword id="KW-0238">DNA-binding</keyword>
<feature type="chain" id="PRO_1000078772" description="Nucleoid-associated protein Shal_1591">
    <location>
        <begin position="1"/>
        <end position="109"/>
    </location>
</feature>
<feature type="region of interest" description="Disordered" evidence="2">
    <location>
        <begin position="87"/>
        <end position="109"/>
    </location>
</feature>
<gene>
    <name type="ordered locus">Shal_1591</name>
</gene>
<dbReference type="EMBL" id="CP000931">
    <property type="protein sequence ID" value="ABZ76157.1"/>
    <property type="molecule type" value="Genomic_DNA"/>
</dbReference>
<dbReference type="RefSeq" id="WP_012276695.1">
    <property type="nucleotide sequence ID" value="NC_010334.1"/>
</dbReference>
<dbReference type="SMR" id="B0TP00"/>
<dbReference type="STRING" id="458817.Shal_1591"/>
<dbReference type="KEGG" id="shl:Shal_1591"/>
<dbReference type="eggNOG" id="COG0718">
    <property type="taxonomic scope" value="Bacteria"/>
</dbReference>
<dbReference type="HOGENOM" id="CLU_140930_0_0_6"/>
<dbReference type="OrthoDB" id="9808738at2"/>
<dbReference type="Proteomes" id="UP000001317">
    <property type="component" value="Chromosome"/>
</dbReference>
<dbReference type="GO" id="GO:0043590">
    <property type="term" value="C:bacterial nucleoid"/>
    <property type="evidence" value="ECO:0007669"/>
    <property type="project" value="UniProtKB-UniRule"/>
</dbReference>
<dbReference type="GO" id="GO:0005829">
    <property type="term" value="C:cytosol"/>
    <property type="evidence" value="ECO:0007669"/>
    <property type="project" value="TreeGrafter"/>
</dbReference>
<dbReference type="GO" id="GO:0003677">
    <property type="term" value="F:DNA binding"/>
    <property type="evidence" value="ECO:0007669"/>
    <property type="project" value="UniProtKB-UniRule"/>
</dbReference>
<dbReference type="FunFam" id="3.30.1310.10:FF:000001">
    <property type="entry name" value="Nucleoid-associated protein YbaB"/>
    <property type="match status" value="1"/>
</dbReference>
<dbReference type="Gene3D" id="3.30.1310.10">
    <property type="entry name" value="Nucleoid-associated protein YbaB-like domain"/>
    <property type="match status" value="1"/>
</dbReference>
<dbReference type="HAMAP" id="MF_00274">
    <property type="entry name" value="DNA_YbaB_EbfC"/>
    <property type="match status" value="1"/>
</dbReference>
<dbReference type="InterPro" id="IPR036894">
    <property type="entry name" value="YbaB-like_sf"/>
</dbReference>
<dbReference type="InterPro" id="IPR004401">
    <property type="entry name" value="YbaB/EbfC"/>
</dbReference>
<dbReference type="NCBIfam" id="TIGR00103">
    <property type="entry name" value="DNA_YbaB_EbfC"/>
    <property type="match status" value="1"/>
</dbReference>
<dbReference type="PANTHER" id="PTHR33449">
    <property type="entry name" value="NUCLEOID-ASSOCIATED PROTEIN YBAB"/>
    <property type="match status" value="1"/>
</dbReference>
<dbReference type="PANTHER" id="PTHR33449:SF1">
    <property type="entry name" value="NUCLEOID-ASSOCIATED PROTEIN YBAB"/>
    <property type="match status" value="1"/>
</dbReference>
<dbReference type="Pfam" id="PF02575">
    <property type="entry name" value="YbaB_DNA_bd"/>
    <property type="match status" value="1"/>
</dbReference>
<dbReference type="PIRSF" id="PIRSF004555">
    <property type="entry name" value="UCP004555"/>
    <property type="match status" value="1"/>
</dbReference>
<dbReference type="SUPFAM" id="SSF82607">
    <property type="entry name" value="YbaB-like"/>
    <property type="match status" value="1"/>
</dbReference>
<proteinExistence type="inferred from homology"/>
<evidence type="ECO:0000255" key="1">
    <source>
        <dbReference type="HAMAP-Rule" id="MF_00274"/>
    </source>
</evidence>
<evidence type="ECO:0000256" key="2">
    <source>
        <dbReference type="SAM" id="MobiDB-lite"/>
    </source>
</evidence>
<name>Y1591_SHEHH</name>
<reference key="1">
    <citation type="submission" date="2008-01" db="EMBL/GenBank/DDBJ databases">
        <title>Complete sequence of Shewanella halifaxensis HAW-EB4.</title>
        <authorList>
            <consortium name="US DOE Joint Genome Institute"/>
            <person name="Copeland A."/>
            <person name="Lucas S."/>
            <person name="Lapidus A."/>
            <person name="Glavina del Rio T."/>
            <person name="Dalin E."/>
            <person name="Tice H."/>
            <person name="Bruce D."/>
            <person name="Goodwin L."/>
            <person name="Pitluck S."/>
            <person name="Sims D."/>
            <person name="Brettin T."/>
            <person name="Detter J.C."/>
            <person name="Han C."/>
            <person name="Kuske C.R."/>
            <person name="Schmutz J."/>
            <person name="Larimer F."/>
            <person name="Land M."/>
            <person name="Hauser L."/>
            <person name="Kyrpides N."/>
            <person name="Kim E."/>
            <person name="Zhao J.-S."/>
            <person name="Richardson P."/>
        </authorList>
    </citation>
    <scope>NUCLEOTIDE SEQUENCE [LARGE SCALE GENOMIC DNA]</scope>
    <source>
        <strain>HAW-EB4</strain>
    </source>
</reference>
<protein>
    <recommendedName>
        <fullName evidence="1">Nucleoid-associated protein Shal_1591</fullName>
    </recommendedName>
</protein>
<comment type="function">
    <text evidence="1">Binds to DNA and alters its conformation. May be involved in regulation of gene expression, nucleoid organization and DNA protection.</text>
</comment>
<comment type="subunit">
    <text evidence="1">Homodimer.</text>
</comment>
<comment type="subcellular location">
    <subcellularLocation>
        <location evidence="1">Cytoplasm</location>
        <location evidence="1">Nucleoid</location>
    </subcellularLocation>
</comment>
<comment type="similarity">
    <text evidence="1">Belongs to the YbaB/EbfC family.</text>
</comment>
<sequence length="109" mass="11861">MFGKGGMGNLMKQAQQMQDKMAKVQEEIARMEVTGEAGAGLVKVTMTGSHSVRKVDIDASLLEDDKEMLEDLIAAACNDAARRVEENQKEKMAEVTGGMQLPPGMKMPF</sequence>
<organism>
    <name type="scientific">Shewanella halifaxensis (strain HAW-EB4)</name>
    <dbReference type="NCBI Taxonomy" id="458817"/>
    <lineage>
        <taxon>Bacteria</taxon>
        <taxon>Pseudomonadati</taxon>
        <taxon>Pseudomonadota</taxon>
        <taxon>Gammaproteobacteria</taxon>
        <taxon>Alteromonadales</taxon>
        <taxon>Shewanellaceae</taxon>
        <taxon>Shewanella</taxon>
    </lineage>
</organism>